<sequence>MWPGPALLLLGLGLGLGSQPPPTGPRGLPGVLRGAPGLGQGAESSVRGGDTGGLSPRAAPRHASPTPPRRCPSGAAARVLLKVNSSDPAAAKANVSCQTAPCIMQPVKINRKDQNAPLILSRDEEATLNITVRWYCPDALVIRKSWVYFSVASVNDTPDWNRPVLLPQVAVSKGFSLHIPKYALPYGVYVFNFTLSIFRWDLAWPTVTGSDIIYIWVRKRPLKAVLLGAPRVTVKFSDELILNGSMSYDPEADIPTWGLQFFWYCTTNPRYYSGNYVLVINQAVCHPEQDSLNWPWAVGSVLTIPPKTLRGNGVYYFRMVVQKQNRTAFSDKTVHVLQGLQPKAHISCIENCGPTLGVSDRFSLFLNCPSCGRQDLYSWSILSLTGHEVMFDWAGQAITRRNGPYLSIKAFAFRNFLENRVWVSLILKSWSGMTTTLRHPVVINHGPRVGKCKINPASGISMVTKFAVECSDFKDENLPLKYKIIVSELDSIGAISSVEENTLGSVVYSGAEPITPAFFLPVGTVTDEYNVRLYVQVYDSLGTFSQVTLQATVTAPTVRDSSKDVLQQLLNVTMKPTSLLSTLLQKQDWLQAGYLTYVVISVLNNIKGEQELQDDRARLLEHLVKQSLTFAMNTADEIGQSVMVITKLTQKASDLSQADLEATSFRLRQASQDLQEYQHRHKHLQQVEVVGTGILTSLSNLLKLINPYYTLQDPLFVVESLSDTILANKVPGSKTTALRTSNFNMYVEKVENWNVFKAFRNDSLCPNCLRATLNASTVPRLPAKAPISMMFCEFADDPFPWLTYPENISVDVVGFRMTGVADNNKVIEITPDIAEVYLVRKDLTPSSFNLTVGPGIKSDGFSKVTTGGISFEVDSRWTGELLIHIVTNVTVLFEALVYEGCQLTPTNLMATFLVPNDIPPIVKWSGLFDPTCSVKEARVVCLSSSLLRSIAQRRFSFKYNISMVLQASRFVLKPTNKLVRIALFMVHCLDMYGIQSDWQQSTCVLGEKTTWKTVHCVCRNGRRSRRQLTSVKLTYHHLHTHFVTAKVIVVPNPVDLRLAIISNLTQNPATFLAVLFIMILYAILAFWALHRDVIDLYFRDNVVILTDNDPFDTLCYLVTIFTGSRWGSGTRANVFIQLMGTEGTSDVHCLSHPYFKTLYRGSINTFLLTTKNDLGDIHSIRVWHDNSGEAPSWYLSRIKVENLFNKRIWLFVCRRWLSVDTTLDATFSVTNPDEPLKRTDFFMIDVRDKLRKNHMWISIFTEIVPKPFNRLQRLSCCLAMLLSSLVCNIMFFNLNQKEKIESRHMHIIRSMLIGIESVVITIPVQLLITFFFTYSQKNLKMNLDKVAPQKHPLMSEEGLSWKERLHKWHEYEMKALPRRAAVSTSAPEEKEAFETSQKHEKADTQMSNKNSSNNNQEASEGVPPKAFSSQPHTTESVQKKTQIILPRWCVYIAWFLVFATSGISSFFIVFYGVTYGYAKSIEWLFASFCSFCQSVFLVQPCNILLRSGTRSYKPKYCKNLSWSSKYHYSEIRLQGLTMTQEEMEQLHEDIAYVRSLSMYQPITEDKIQILRRENRIRRRSFLFLSYLVTHFIFLTLLLLLIFSLRHNDSFYYNQFIRHRFSVDLATVMKLGDIYTWLHGVFLPLLHNDPNPTFLPDSSSKILGLPLVRQVRARPSNKTCLLAKKFVQSSVAGEIHCHPQYGIDPEDTQHYSSVWSKAGKQSTDKASHGFTYKPPGKRWVYHSYGVLNTYGSGGYVFYFFPGQQMFNSTVRLKELEGKNWLDELTWAVIVELTTLNPDTSLMCSISVVFEVSPLGVVNSSLSVYSFSLADFNRKTSSEIYLYAAILIFFCAYVVDEGYIIRQERASYIRSVYNLLNFSLKCMFALLIVLFFWKYFLATKMVQLYLADPEAFIPFHAVSRVDHFMRIILAFLLFLTILKTLRYSRFFYNVRLAQKAIQAALPGICHTALVVSIYSFMYVAFGYLVFGQHEWNYSNMIHATQTIFSYCVSAFQNTEFSGNKVLGVLFLSSFMLVMICIFINLFQAVILSAYDEMKQPVYEEPSDEAEAVTYLCNRLKSGFDFLTTRSRDKDQSNFFVDMLYGQPEKNTRRFLGLKARNINGKKMIYLVV</sequence>
<evidence type="ECO:0000250" key="1">
    <source>
        <dbReference type="UniProtKB" id="Q9NTG1"/>
    </source>
</evidence>
<evidence type="ECO:0000255" key="2"/>
<evidence type="ECO:0000255" key="3">
    <source>
        <dbReference type="PROSITE-ProRule" id="PRU00152"/>
    </source>
</evidence>
<evidence type="ECO:0000255" key="4">
    <source>
        <dbReference type="PROSITE-ProRule" id="PRU00511"/>
    </source>
</evidence>
<evidence type="ECO:0000256" key="5">
    <source>
        <dbReference type="SAM" id="MobiDB-lite"/>
    </source>
</evidence>
<evidence type="ECO:0000269" key="6">
    <source>
    </source>
</evidence>
<evidence type="ECO:0000269" key="7">
    <source>
    </source>
</evidence>
<evidence type="ECO:0000269" key="8">
    <source>
    </source>
</evidence>
<evidence type="ECO:0000305" key="9"/>
<evidence type="ECO:0000312" key="10">
    <source>
        <dbReference type="MGI" id="MGI:1338786"/>
    </source>
</evidence>
<gene>
    <name type="primary">Pkdrej</name>
</gene>
<dbReference type="EMBL" id="AF116459">
    <property type="protein sequence ID" value="AAD18022.1"/>
    <property type="molecule type" value="Genomic_DNA"/>
</dbReference>
<dbReference type="EMBL" id="AC117784">
    <property type="status" value="NOT_ANNOTATED_CDS"/>
    <property type="molecule type" value="Genomic_DNA"/>
</dbReference>
<dbReference type="CCDS" id="CCDS27723.1"/>
<dbReference type="RefSeq" id="NP_035235.2">
    <property type="nucleotide sequence ID" value="NM_011105.2"/>
</dbReference>
<dbReference type="FunCoup" id="Q9Z0T6">
    <property type="interactions" value="261"/>
</dbReference>
<dbReference type="STRING" id="10090.ENSMUSP00000086352"/>
<dbReference type="GlyCosmos" id="Q9Z0T6">
    <property type="glycosylation" value="18 sites, No reported glycans"/>
</dbReference>
<dbReference type="GlyGen" id="Q9Z0T6">
    <property type="glycosylation" value="20 sites"/>
</dbReference>
<dbReference type="iPTMnet" id="Q9Z0T6"/>
<dbReference type="PhosphoSitePlus" id="Q9Z0T6"/>
<dbReference type="PaxDb" id="10090-ENSMUSP00000086352"/>
<dbReference type="ProteomicsDB" id="289439"/>
<dbReference type="ProteomicsDB" id="306198"/>
<dbReference type="Antibodypedia" id="28028">
    <property type="antibodies" value="29 antibodies from 12 providers"/>
</dbReference>
<dbReference type="DNASU" id="18766"/>
<dbReference type="Ensembl" id="ENSMUST00000064370.6">
    <property type="protein sequence ID" value="ENSMUSP00000086352.3"/>
    <property type="gene ID" value="ENSMUSG00000052496.6"/>
</dbReference>
<dbReference type="GeneID" id="18766"/>
<dbReference type="KEGG" id="mmu:18766"/>
<dbReference type="AGR" id="MGI:1338786"/>
<dbReference type="CTD" id="10343"/>
<dbReference type="MGI" id="MGI:1338786">
    <property type="gene designation" value="Pkdrej"/>
</dbReference>
<dbReference type="VEuPathDB" id="HostDB:ENSMUSG00000052496"/>
<dbReference type="eggNOG" id="KOG3599">
    <property type="taxonomic scope" value="Eukaryota"/>
</dbReference>
<dbReference type="GeneTree" id="ENSGT00940000162080"/>
<dbReference type="HOGENOM" id="CLU_001765_0_0_1"/>
<dbReference type="InParanoid" id="Q9Z0T6"/>
<dbReference type="OMA" id="PDNDPFH"/>
<dbReference type="OrthoDB" id="2121937at2759"/>
<dbReference type="PhylomeDB" id="Q9Z0T6"/>
<dbReference type="TreeFam" id="TF316484"/>
<dbReference type="BioGRID-ORCS" id="18766">
    <property type="hits" value="2 hits in 76 CRISPR screens"/>
</dbReference>
<dbReference type="ChiTaRS" id="Pkdrej">
    <property type="organism name" value="mouse"/>
</dbReference>
<dbReference type="PRO" id="PR:Q9Z0T6"/>
<dbReference type="Proteomes" id="UP000000589">
    <property type="component" value="Chromosome 15"/>
</dbReference>
<dbReference type="RNAct" id="Q9Z0T6">
    <property type="molecule type" value="protein"/>
</dbReference>
<dbReference type="Bgee" id="ENSMUSG00000052496">
    <property type="expression patterns" value="Expressed in spermatid and 9 other cell types or tissues"/>
</dbReference>
<dbReference type="GO" id="GO:0002080">
    <property type="term" value="C:acrosomal membrane"/>
    <property type="evidence" value="ECO:0007669"/>
    <property type="project" value="UniProtKB-SubCell"/>
</dbReference>
<dbReference type="GO" id="GO:0005634">
    <property type="term" value="C:nucleus"/>
    <property type="evidence" value="ECO:0000250"/>
    <property type="project" value="UniProtKB"/>
</dbReference>
<dbReference type="GO" id="GO:0097524">
    <property type="term" value="C:sperm plasma membrane"/>
    <property type="evidence" value="ECO:0000314"/>
    <property type="project" value="MGI"/>
</dbReference>
<dbReference type="GO" id="GO:0005509">
    <property type="term" value="F:calcium ion binding"/>
    <property type="evidence" value="ECO:0007669"/>
    <property type="project" value="InterPro"/>
</dbReference>
<dbReference type="GO" id="GO:0060046">
    <property type="term" value="P:regulation of acrosome reaction"/>
    <property type="evidence" value="ECO:0000315"/>
    <property type="project" value="MGI"/>
</dbReference>
<dbReference type="CDD" id="cd01752">
    <property type="entry name" value="PLAT_polycystin"/>
    <property type="match status" value="1"/>
</dbReference>
<dbReference type="FunFam" id="1.10.287.70:FF:000141">
    <property type="entry name" value="Polycystin family receptor for egg jelly"/>
    <property type="match status" value="1"/>
</dbReference>
<dbReference type="FunFam" id="2.60.60.20:FF:000016">
    <property type="entry name" value="Polycystin family receptor for egg jelly"/>
    <property type="match status" value="1"/>
</dbReference>
<dbReference type="Gene3D" id="1.10.287.70">
    <property type="match status" value="1"/>
</dbReference>
<dbReference type="Gene3D" id="2.60.60.20">
    <property type="entry name" value="PLAT/LH2 domain"/>
    <property type="match status" value="1"/>
</dbReference>
<dbReference type="InterPro" id="IPR023298">
    <property type="entry name" value="ATPase_P-typ_TM_dom_sf"/>
</dbReference>
<dbReference type="InterPro" id="IPR002859">
    <property type="entry name" value="PKD/REJ-like"/>
</dbReference>
<dbReference type="InterPro" id="IPR013122">
    <property type="entry name" value="PKD1_2_channel"/>
</dbReference>
<dbReference type="InterPro" id="IPR003915">
    <property type="entry name" value="PKD_2"/>
</dbReference>
<dbReference type="InterPro" id="IPR001024">
    <property type="entry name" value="PLAT/LH2_dom"/>
</dbReference>
<dbReference type="InterPro" id="IPR036392">
    <property type="entry name" value="PLAT/LH2_dom_sf"/>
</dbReference>
<dbReference type="InterPro" id="IPR042060">
    <property type="entry name" value="PLAT_polycystin1"/>
</dbReference>
<dbReference type="InterPro" id="IPR051223">
    <property type="entry name" value="Polycystin"/>
</dbReference>
<dbReference type="InterPro" id="IPR046791">
    <property type="entry name" value="Polycystin_dom"/>
</dbReference>
<dbReference type="InterPro" id="IPR014010">
    <property type="entry name" value="REJ_dom"/>
</dbReference>
<dbReference type="PANTHER" id="PTHR10877">
    <property type="entry name" value="POLYCYSTIN FAMILY MEMBER"/>
    <property type="match status" value="1"/>
</dbReference>
<dbReference type="PANTHER" id="PTHR10877:SF185">
    <property type="entry name" value="POLYCYSTIN FAMILY RECEPTOR FOR EGG JELLY"/>
    <property type="match status" value="1"/>
</dbReference>
<dbReference type="Pfam" id="PF08016">
    <property type="entry name" value="PKD_channel"/>
    <property type="match status" value="1"/>
</dbReference>
<dbReference type="Pfam" id="PF01477">
    <property type="entry name" value="PLAT"/>
    <property type="match status" value="1"/>
</dbReference>
<dbReference type="Pfam" id="PF20519">
    <property type="entry name" value="Polycystin_dom"/>
    <property type="match status" value="1"/>
</dbReference>
<dbReference type="Pfam" id="PF02010">
    <property type="entry name" value="REJ"/>
    <property type="match status" value="1"/>
</dbReference>
<dbReference type="PRINTS" id="PR01433">
    <property type="entry name" value="POLYCYSTIN2"/>
</dbReference>
<dbReference type="SMART" id="SM00308">
    <property type="entry name" value="LH2"/>
    <property type="match status" value="1"/>
</dbReference>
<dbReference type="SUPFAM" id="SSF81665">
    <property type="entry name" value="Calcium ATPase, transmembrane domain M"/>
    <property type="match status" value="1"/>
</dbReference>
<dbReference type="SUPFAM" id="SSF49723">
    <property type="entry name" value="Lipase/lipooxygenase domain (PLAT/LH2 domain)"/>
    <property type="match status" value="1"/>
</dbReference>
<dbReference type="PROSITE" id="PS50095">
    <property type="entry name" value="PLAT"/>
    <property type="match status" value="1"/>
</dbReference>
<dbReference type="PROSITE" id="PS51111">
    <property type="entry name" value="REJ"/>
    <property type="match status" value="1"/>
</dbReference>
<accession>Q9Z0T6</accession>
<accession>F8VQF3</accession>
<name>PKDRE_MOUSE</name>
<organism>
    <name type="scientific">Mus musculus</name>
    <name type="common">Mouse</name>
    <dbReference type="NCBI Taxonomy" id="10090"/>
    <lineage>
        <taxon>Eukaryota</taxon>
        <taxon>Metazoa</taxon>
        <taxon>Chordata</taxon>
        <taxon>Craniata</taxon>
        <taxon>Vertebrata</taxon>
        <taxon>Euteleostomi</taxon>
        <taxon>Mammalia</taxon>
        <taxon>Eutheria</taxon>
        <taxon>Euarchontoglires</taxon>
        <taxon>Glires</taxon>
        <taxon>Rodentia</taxon>
        <taxon>Myomorpha</taxon>
        <taxon>Muroidea</taxon>
        <taxon>Muridae</taxon>
        <taxon>Murinae</taxon>
        <taxon>Mus</taxon>
        <taxon>Mus</taxon>
    </lineage>
</organism>
<reference key="1">
    <citation type="journal article" date="1999" name="Hum. Mol. Genet.">
        <title>Identification of a human homologue of the sea urchin receptor for egg jelly: a polycystic kidney disease-like protein.</title>
        <authorList>
            <person name="Hughes J."/>
            <person name="Ward C.J."/>
            <person name="Aspinwall R."/>
            <person name="Butler R."/>
            <person name="Harris P.C."/>
        </authorList>
    </citation>
    <scope>NUCLEOTIDE SEQUENCE [GENOMIC DNA]</scope>
    <scope>DEVELOPMENTAL STAGE</scope>
    <scope>TISSUE SPECIFICITY</scope>
</reference>
<reference key="2">
    <citation type="journal article" date="2009" name="PLoS Biol.">
        <title>Lineage-specific biology revealed by a finished genome assembly of the mouse.</title>
        <authorList>
            <person name="Church D.M."/>
            <person name="Goodstadt L."/>
            <person name="Hillier L.W."/>
            <person name="Zody M.C."/>
            <person name="Goldstein S."/>
            <person name="She X."/>
            <person name="Bult C.J."/>
            <person name="Agarwala R."/>
            <person name="Cherry J.L."/>
            <person name="DiCuccio M."/>
            <person name="Hlavina W."/>
            <person name="Kapustin Y."/>
            <person name="Meric P."/>
            <person name="Maglott D."/>
            <person name="Birtle Z."/>
            <person name="Marques A.C."/>
            <person name="Graves T."/>
            <person name="Zhou S."/>
            <person name="Teague B."/>
            <person name="Potamousis K."/>
            <person name="Churas C."/>
            <person name="Place M."/>
            <person name="Herschleb J."/>
            <person name="Runnheim R."/>
            <person name="Forrest D."/>
            <person name="Amos-Landgraf J."/>
            <person name="Schwartz D.C."/>
            <person name="Cheng Z."/>
            <person name="Lindblad-Toh K."/>
            <person name="Eichler E.E."/>
            <person name="Ponting C.P."/>
        </authorList>
    </citation>
    <scope>NUCLEOTIDE SEQUENCE [LARGE SCALE GENOMIC DNA]</scope>
    <source>
        <strain>C57BL/6J</strain>
    </source>
</reference>
<reference key="3">
    <citation type="journal article" date="2006" name="Mol. Reprod. Dev.">
        <title>Polycystic kidney disease and receptor for egg jelly is a plasma membrane protein of mouse sperm head.</title>
        <authorList>
            <person name="Butscheid Y."/>
            <person name="Chubanov V."/>
            <person name="Steger K."/>
            <person name="Meyer D."/>
            <person name="Dietrich A."/>
            <person name="Gudermann T."/>
        </authorList>
    </citation>
    <scope>SUBCELLULAR LOCATION</scope>
</reference>
<reference key="4">
    <citation type="journal article" date="2008" name="Proc. Natl. Acad. Sci. U.S.A.">
        <title>A polycystin-1 controls postcopulatory reproductive selection in mice.</title>
        <authorList>
            <person name="Sutton K.A."/>
            <person name="Jungnickel M.K."/>
            <person name="Florman H.M."/>
        </authorList>
    </citation>
    <scope>DISRUPTION PHENOTYPE</scope>
    <scope>FUNCTION</scope>
</reference>
<proteinExistence type="evidence at transcript level"/>
<protein>
    <recommendedName>
        <fullName evidence="10">Polycystin family receptor for egg jelly</fullName>
    </recommendedName>
    <alternativeName>
        <fullName>PKD and REJ homolog</fullName>
    </alternativeName>
    <alternativeName>
        <fullName>Polycystic kidney disease and receptor for egg jelly-related protein</fullName>
    </alternativeName>
</protein>
<comment type="function">
    <text evidence="7">Testis-specific protein that controls sperm transport and the timing of zona pellucida-evoked exocytosis of the sperm acrosome.</text>
</comment>
<comment type="subcellular location">
    <subcellularLocation>
        <location evidence="6">Cell membrane</location>
        <topology evidence="2">Multi-pass membrane protein</topology>
    </subcellularLocation>
    <subcellularLocation>
        <location evidence="6">Cytoplasmic vesicle</location>
        <location evidence="6">Secretory vesicle</location>
        <location evidence="6">Acrosome membrane</location>
        <topology evidence="2">Multi-pass membrane protein</topology>
    </subcellularLocation>
    <subcellularLocation>
        <location evidence="1">Nucleus</location>
    </subcellularLocation>
</comment>
<comment type="tissue specificity">
    <text evidence="8">Exclusively expressed in testis.</text>
</comment>
<comment type="developmental stage">
    <text>Expression begins at about 2 weeks and continues into adult life, mirroring the production of mature spermatozoa.</text>
</comment>
<comment type="disruption phenotype">
    <text evidence="7">Homozygous null males are fertile and are able to capacitate in vitro in unrestricted mating trials but show lower reproductive success in sequential mating and artificial insemination trials. However, the acrosome reaction of Pkdrej-null sperm develops more slowly and takes three times longer to reach the ovum when compared to wild-type mice.</text>
</comment>
<comment type="similarity">
    <text evidence="9">Belongs to the polycystin family.</text>
</comment>
<feature type="signal peptide" evidence="2">
    <location>
        <begin position="1"/>
        <end position="18"/>
    </location>
</feature>
<feature type="chain" id="PRO_0000024300" description="Polycystin family receptor for egg jelly">
    <location>
        <begin position="19"/>
        <end position="2126"/>
    </location>
</feature>
<feature type="topological domain" description="Extracellular" evidence="2">
    <location>
        <begin position="19"/>
        <end position="1068"/>
    </location>
</feature>
<feature type="transmembrane region" description="Helical" evidence="2">
    <location>
        <begin position="1069"/>
        <end position="1089"/>
    </location>
</feature>
<feature type="topological domain" description="Cytoplasmic" evidence="2">
    <location>
        <begin position="1090"/>
        <end position="1273"/>
    </location>
</feature>
<feature type="transmembrane region" description="Helical" evidence="2">
    <location>
        <begin position="1274"/>
        <end position="1294"/>
    </location>
</feature>
<feature type="topological domain" description="Extracellular" evidence="2">
    <location>
        <begin position="1295"/>
        <end position="1311"/>
    </location>
</feature>
<feature type="transmembrane region" description="Helical" evidence="2">
    <location>
        <begin position="1312"/>
        <end position="1332"/>
    </location>
</feature>
<feature type="topological domain" description="Cytoplasmic" evidence="2">
    <location>
        <begin position="1333"/>
        <end position="1449"/>
    </location>
</feature>
<feature type="transmembrane region" description="Helical" evidence="2">
    <location>
        <begin position="1450"/>
        <end position="1470"/>
    </location>
</feature>
<feature type="topological domain" description="Extracellular" evidence="2">
    <location>
        <begin position="1471"/>
        <end position="1483"/>
    </location>
</feature>
<feature type="transmembrane region" description="Helical" evidence="2">
    <location>
        <begin position="1484"/>
        <end position="1504"/>
    </location>
</feature>
<feature type="topological domain" description="Cytoplasmic" evidence="2">
    <location>
        <begin position="1505"/>
        <end position="1580"/>
    </location>
</feature>
<feature type="transmembrane region" description="Helical" evidence="2">
    <location>
        <begin position="1581"/>
        <end position="1601"/>
    </location>
</feature>
<feature type="topological domain" description="Extracellular" evidence="2">
    <location>
        <begin position="1602"/>
        <end position="1838"/>
    </location>
</feature>
<feature type="transmembrane region" description="Helical" evidence="2">
    <location>
        <begin position="1839"/>
        <end position="1859"/>
    </location>
</feature>
<feature type="topological domain" description="Cytoplasmic" evidence="2">
    <location>
        <begin position="1860"/>
        <end position="1875"/>
    </location>
</feature>
<feature type="transmembrane region" description="Helical" evidence="2">
    <location>
        <begin position="1876"/>
        <end position="1896"/>
    </location>
</feature>
<feature type="topological domain" description="Extracellular" evidence="2">
    <location>
        <begin position="1897"/>
        <end position="1918"/>
    </location>
</feature>
<feature type="transmembrane region" description="Helical" evidence="2">
    <location>
        <begin position="1919"/>
        <end position="1939"/>
    </location>
</feature>
<feature type="topological domain" description="Cytoplasmic" evidence="2">
    <location>
        <begin position="1940"/>
        <end position="1964"/>
    </location>
</feature>
<feature type="transmembrane region" description="Helical" evidence="2">
    <location>
        <begin position="1965"/>
        <end position="1985"/>
    </location>
</feature>
<feature type="topological domain" description="Extracellular" evidence="2">
    <location>
        <begin position="1986"/>
        <end position="2019"/>
    </location>
</feature>
<feature type="transmembrane region" description="Helical" evidence="2">
    <location>
        <begin position="2020"/>
        <end position="2040"/>
    </location>
</feature>
<feature type="topological domain" description="Cytoplasmic" evidence="2">
    <location>
        <begin position="2041"/>
        <end position="2126"/>
    </location>
</feature>
<feature type="domain" description="REJ" evidence="4">
    <location>
        <begin position="102"/>
        <end position="797"/>
    </location>
</feature>
<feature type="domain" description="PLAT" evidence="3">
    <location>
        <begin position="1114"/>
        <end position="1231"/>
    </location>
</feature>
<feature type="region of interest" description="Disordered" evidence="5">
    <location>
        <begin position="20"/>
        <end position="71"/>
    </location>
</feature>
<feature type="region of interest" description="Disordered" evidence="5">
    <location>
        <begin position="1379"/>
        <end position="1431"/>
    </location>
</feature>
<feature type="compositionally biased region" description="Basic and acidic residues" evidence="5">
    <location>
        <begin position="1387"/>
        <end position="1403"/>
    </location>
</feature>
<feature type="glycosylation site" description="N-linked (GlcNAc...) asparagine" evidence="2">
    <location>
        <position position="84"/>
    </location>
</feature>
<feature type="glycosylation site" description="N-linked (GlcNAc...) asparagine" evidence="2">
    <location>
        <position position="94"/>
    </location>
</feature>
<feature type="glycosylation site" description="N-linked (GlcNAc...) asparagine" evidence="2">
    <location>
        <position position="129"/>
    </location>
</feature>
<feature type="glycosylation site" description="N-linked (GlcNAc...) asparagine" evidence="2">
    <location>
        <position position="192"/>
    </location>
</feature>
<feature type="glycosylation site" description="N-linked (GlcNAc...) asparagine" evidence="2">
    <location>
        <position position="243"/>
    </location>
</feature>
<feature type="glycosylation site" description="N-linked (GlcNAc...) asparagine" evidence="2">
    <location>
        <position position="325"/>
    </location>
</feature>
<feature type="glycosylation site" description="N-linked (GlcNAc...) asparagine" evidence="2">
    <location>
        <position position="571"/>
    </location>
</feature>
<feature type="glycosylation site" description="N-linked (GlcNAc...) asparagine" evidence="2">
    <location>
        <position position="761"/>
    </location>
</feature>
<feature type="glycosylation site" description="N-linked (GlcNAc...) asparagine" evidence="2">
    <location>
        <position position="774"/>
    </location>
</feature>
<feature type="glycosylation site" description="N-linked (GlcNAc...) asparagine" evidence="2">
    <location>
        <position position="807"/>
    </location>
</feature>
<feature type="glycosylation site" description="N-linked (GlcNAc...) asparagine" evidence="2">
    <location>
        <position position="849"/>
    </location>
</feature>
<feature type="glycosylation site" description="N-linked (GlcNAc...) asparagine" evidence="2">
    <location>
        <position position="888"/>
    </location>
</feature>
<feature type="glycosylation site" description="N-linked (GlcNAc...) asparagine" evidence="2">
    <location>
        <position position="960"/>
    </location>
</feature>
<feature type="glycosylation site" description="N-linked (GlcNAc...) asparagine" evidence="2">
    <location>
        <position position="1063"/>
    </location>
</feature>
<feature type="glycosylation site" description="N-linked (GlcNAc...) asparagine" evidence="2">
    <location>
        <position position="1607"/>
    </location>
</feature>
<feature type="glycosylation site" description="N-linked (GlcNAc...) asparagine" evidence="2">
    <location>
        <position position="1676"/>
    </location>
</feature>
<feature type="glycosylation site" description="N-linked (GlcNAc...) asparagine" evidence="2">
    <location>
        <position position="1766"/>
    </location>
</feature>
<feature type="glycosylation site" description="N-linked (GlcNAc...) asparagine" evidence="2">
    <location>
        <position position="1817"/>
    </location>
</feature>
<feature type="sequence conflict" description="In Ref. 1; AAD18022." evidence="9" ref="1">
    <original>N</original>
    <variation>Y</variation>
    <location>
        <position position="742"/>
    </location>
</feature>
<keyword id="KW-1003">Cell membrane</keyword>
<keyword id="KW-0968">Cytoplasmic vesicle</keyword>
<keyword id="KW-0325">Glycoprotein</keyword>
<keyword id="KW-0472">Membrane</keyword>
<keyword id="KW-0539">Nucleus</keyword>
<keyword id="KW-1185">Reference proteome</keyword>
<keyword id="KW-0732">Signal</keyword>
<keyword id="KW-0812">Transmembrane</keyword>
<keyword id="KW-1133">Transmembrane helix</keyword>